<proteinExistence type="evidence at protein level"/>
<reference key="1">
    <citation type="journal article" date="2001" name="Biochem. J.">
        <title>Macrophage migration inhibitory factor of the parasitic nematode Trichinella spiralis.</title>
        <authorList>
            <person name="Tan T.H.P."/>
            <person name="Edgerton S.A.V."/>
            <person name="Kumari R."/>
            <person name="McAlister M.S.B."/>
            <person name="Roe S.M."/>
            <person name="Nagl S."/>
            <person name="Pearl L.H."/>
            <person name="Selkirk M.E."/>
            <person name="Bianco A.E."/>
            <person name="Totty N.F."/>
            <person name="Engwerda C."/>
            <person name="Gray C.A."/>
            <person name="Meyer D.J."/>
            <person name="Rowe S.M."/>
        </authorList>
    </citation>
    <scope>NUCLEOTIDE SEQUENCE [MRNA]</scope>
    <scope>PROTEIN SEQUENCE OF 2-31; 64-71 AND 104-107</scope>
    <scope>FUNCTION</scope>
    <scope>CATALYTIC ACTIVITY</scope>
    <scope>BIOPHYSICOCHEMICAL PROPERTIES</scope>
    <scope>SUBCELLULAR LOCATION</scope>
    <scope>X-RAY CRYSTALLOGRAPHY (1.65 ANGSTROMS) OF 2-114</scope>
    <source>
        <tissue>Larva</tissue>
    </source>
</reference>
<reference key="2">
    <citation type="journal article" date="2003" name="J. Parasitol.">
        <title>Molecular expression and characterization of a homologue of host cytokine macrophage migration inhibitory factor from Trichinella spp.</title>
        <authorList>
            <person name="Wu Z."/>
            <person name="Boonmars T."/>
            <person name="Nagano I."/>
            <person name="Nakada T."/>
            <person name="Takahashi Y."/>
        </authorList>
    </citation>
    <scope>NUCLEOTIDE SEQUENCE [MRNA]</scope>
    <scope>DEVELOPMENTAL STAGE</scope>
    <source>
        <strain>ISS314</strain>
    </source>
</reference>
<reference key="3">
    <citation type="journal article" date="1998" name="Biochem. J.">
        <title>Rapid purification and characterization of L-dopachrome-methyl-ester tautomerase (macrophage migration inhibitory factor) from Trichinella spiralis, Trichuris muris and Brugia pahangi.</title>
        <authorList>
            <person name="Pennock J.L."/>
            <person name="Behnke J.M."/>
            <person name="Bickle Q.D."/>
            <person name="Devaney E."/>
            <person name="Grencis R.K."/>
            <person name="Isaac R.E."/>
            <person name="Joshua G.W.P."/>
            <person name="Selkirk M.E."/>
            <person name="Zhang Y."/>
            <person name="Meyer D.J."/>
        </authorList>
    </citation>
    <scope>PROTEIN SEQUENCE OF 2-20</scope>
    <scope>FUNCTION</scope>
    <scope>CATALYTIC ACTIVITY</scope>
    <scope>INDUCTION</scope>
    <source>
        <tissue>Larva</tissue>
    </source>
</reference>
<dbReference type="EC" id="5.3.2.1"/>
<dbReference type="EC" id="5.3.3.12"/>
<dbReference type="EMBL" id="AJ012740">
    <property type="protein sequence ID" value="CAB46354.1"/>
    <property type="molecule type" value="mRNA"/>
</dbReference>
<dbReference type="EMBL" id="AY050661">
    <property type="protein sequence ID" value="AAL12629.1"/>
    <property type="molecule type" value="mRNA"/>
</dbReference>
<dbReference type="PDB" id="1HFO">
    <property type="method" value="X-ray"/>
    <property type="resolution" value="1.65 A"/>
    <property type="chains" value="A/B/C/D/E/F=2-114"/>
</dbReference>
<dbReference type="PDBsum" id="1HFO"/>
<dbReference type="SMR" id="P81529"/>
<dbReference type="eggNOG" id="KOG1759">
    <property type="taxonomic scope" value="Eukaryota"/>
</dbReference>
<dbReference type="HOGENOM" id="CLU_129906_1_1_1"/>
<dbReference type="OrthoDB" id="255819at2759"/>
<dbReference type="EvolutionaryTrace" id="P81529"/>
<dbReference type="GO" id="GO:0005615">
    <property type="term" value="C:extracellular space"/>
    <property type="evidence" value="ECO:0007669"/>
    <property type="project" value="UniProtKB-KW"/>
</dbReference>
<dbReference type="GO" id="GO:0005125">
    <property type="term" value="F:cytokine activity"/>
    <property type="evidence" value="ECO:0007669"/>
    <property type="project" value="UniProtKB-KW"/>
</dbReference>
<dbReference type="GO" id="GO:0004167">
    <property type="term" value="F:dopachrome isomerase activity"/>
    <property type="evidence" value="ECO:0007669"/>
    <property type="project" value="UniProtKB-EC"/>
</dbReference>
<dbReference type="GO" id="GO:0050178">
    <property type="term" value="F:phenylpyruvate tautomerase activity"/>
    <property type="evidence" value="ECO:0007669"/>
    <property type="project" value="UniProtKB-EC"/>
</dbReference>
<dbReference type="Gene3D" id="3.30.429.10">
    <property type="entry name" value="Macrophage Migration Inhibitory Factor"/>
    <property type="match status" value="1"/>
</dbReference>
<dbReference type="InterPro" id="IPR001398">
    <property type="entry name" value="Macrophage_inhib_fac"/>
</dbReference>
<dbReference type="InterPro" id="IPR014347">
    <property type="entry name" value="Tautomerase/MIF_sf"/>
</dbReference>
<dbReference type="PANTHER" id="PTHR11954">
    <property type="entry name" value="D-DOPACHROME DECARBOXYLASE"/>
    <property type="match status" value="1"/>
</dbReference>
<dbReference type="PANTHER" id="PTHR11954:SF6">
    <property type="entry name" value="MACROPHAGE MIGRATION INHIBITORY FACTOR"/>
    <property type="match status" value="1"/>
</dbReference>
<dbReference type="Pfam" id="PF01187">
    <property type="entry name" value="MIF"/>
    <property type="match status" value="1"/>
</dbReference>
<dbReference type="SUPFAM" id="SSF55331">
    <property type="entry name" value="Tautomerase/MIF"/>
    <property type="match status" value="1"/>
</dbReference>
<name>MIFH_TRISP</name>
<evidence type="ECO:0000250" key="1"/>
<evidence type="ECO:0000269" key="2">
    <source>
    </source>
</evidence>
<evidence type="ECO:0000269" key="3">
    <source>
    </source>
</evidence>
<evidence type="ECO:0000269" key="4">
    <source>
    </source>
</evidence>
<evidence type="ECO:0000305" key="5"/>
<evidence type="ECO:0007829" key="6">
    <source>
        <dbReference type="PDB" id="1HFO"/>
    </source>
</evidence>
<organism>
    <name type="scientific">Trichinella spiralis</name>
    <name type="common">Trichina worm</name>
    <dbReference type="NCBI Taxonomy" id="6334"/>
    <lineage>
        <taxon>Eukaryota</taxon>
        <taxon>Metazoa</taxon>
        <taxon>Ecdysozoa</taxon>
        <taxon>Nematoda</taxon>
        <taxon>Enoplea</taxon>
        <taxon>Dorylaimia</taxon>
        <taxon>Trichinellida</taxon>
        <taxon>Trichinellidae</taxon>
        <taxon>Trichinella</taxon>
    </lineage>
</organism>
<sequence>MPIFTLNTNIKATDVPSDFLSSTSALVGNILSKPGSYVAVHINTDQQLSFGGSTKPAAFGTLMSIGGIEPSRNRDHSAKLFDHLNKKLGIPKNRMYIHFVNLNGDDVGWNGTTF</sequence>
<accession>P81529</accession>
<accession>Q95UI8</accession>
<accession>Q9Y063</accession>
<keyword id="KW-0002">3D-structure</keyword>
<keyword id="KW-0202">Cytokine</keyword>
<keyword id="KW-0903">Direct protein sequencing</keyword>
<keyword id="KW-0413">Isomerase</keyword>
<keyword id="KW-0964">Secreted</keyword>
<comment type="function">
    <text evidence="2 4">Tautomerization of the methyl ester of L-dopachrome. Inhibits migration of human peripheral blood mononuclear cells.</text>
</comment>
<comment type="catalytic activity">
    <reaction>
        <text>L-dopachrome = 5,6-dihydroxyindole-2-carboxylate</text>
        <dbReference type="Rhea" id="RHEA:13041"/>
        <dbReference type="ChEBI" id="CHEBI:16875"/>
        <dbReference type="ChEBI" id="CHEBI:57509"/>
        <dbReference type="EC" id="5.3.3.12"/>
    </reaction>
</comment>
<comment type="catalytic activity">
    <reaction>
        <text>3-phenylpyruvate = enol-phenylpyruvate</text>
        <dbReference type="Rhea" id="RHEA:17097"/>
        <dbReference type="ChEBI" id="CHEBI:16815"/>
        <dbReference type="ChEBI" id="CHEBI:18005"/>
        <dbReference type="EC" id="5.3.2.1"/>
    </reaction>
</comment>
<comment type="biophysicochemical properties">
    <kinetics>
        <KM evidence="2">144 uM for phenylpyruvate</KM>
        <KM evidence="2">783 uM for p-hydroxyphenylpyruvate</KM>
        <Vmax evidence="2">1026.0 umol/min/mg enzyme toward phenylpyruvate</Vmax>
        <Vmax evidence="2">34.6 umol/min/mg enzyme toward p-hydroxyphenylpyruvate</Vmax>
    </kinetics>
</comment>
<comment type="subcellular location">
    <subcellularLocation>
        <location evidence="2">Secreted</location>
    </subcellularLocation>
    <text>Secreted by larvae into the host.</text>
</comment>
<comment type="developmental stage">
    <text evidence="3">Expressed in newborn larvae, precyst muscle larvae, postcyst muscle larvae and adult worms.</text>
</comment>
<comment type="induction">
    <text evidence="4">Inhibited by free fatty acids and haematin.</text>
</comment>
<comment type="similarity">
    <text evidence="5">Belongs to the MIF family.</text>
</comment>
<protein>
    <recommendedName>
        <fullName>Macrophage migration inhibitory factor homolog</fullName>
        <shortName>MIF</shortName>
        <ecNumber>5.3.2.1</ecNumber>
    </recommendedName>
    <alternativeName>
        <fullName>L-dopachrome isomerase</fullName>
    </alternativeName>
    <alternativeName>
        <fullName>L-dopachrome tautomerase</fullName>
        <ecNumber>5.3.3.12</ecNumber>
    </alternativeName>
    <alternativeName>
        <fullName>Phenylpyruvate tautomerase</fullName>
    </alternativeName>
</protein>
<feature type="initiator methionine" description="Removed" evidence="2 4">
    <location>
        <position position="1"/>
    </location>
</feature>
<feature type="chain" id="PRO_0000158074" description="Macrophage migration inhibitory factor homolog">
    <location>
        <begin position="2"/>
        <end position="114"/>
    </location>
</feature>
<feature type="active site" description="Proton acceptor; via imino nitrogen" evidence="1">
    <location>
        <position position="2"/>
    </location>
</feature>
<feature type="binding site" evidence="1">
    <location>
        <position position="33"/>
    </location>
    <ligand>
        <name>substrate</name>
    </ligand>
</feature>
<feature type="binding site" evidence="1">
    <location>
        <position position="65"/>
    </location>
    <ligand>
        <name>substrate</name>
    </ligand>
</feature>
<feature type="sequence conflict" description="In Ref. 1; CAB46354." evidence="5" ref="1">
    <original>K</original>
    <variation>N</variation>
    <location>
        <position position="55"/>
    </location>
</feature>
<feature type="strand" evidence="6">
    <location>
        <begin position="3"/>
        <end position="10"/>
    </location>
</feature>
<feature type="helix" evidence="6">
    <location>
        <begin position="12"/>
        <end position="14"/>
    </location>
</feature>
<feature type="helix" evidence="6">
    <location>
        <begin position="19"/>
        <end position="31"/>
    </location>
</feature>
<feature type="helix" evidence="6">
    <location>
        <begin position="35"/>
        <end position="37"/>
    </location>
</feature>
<feature type="strand" evidence="6">
    <location>
        <begin position="39"/>
        <end position="43"/>
    </location>
</feature>
<feature type="strand" evidence="6">
    <location>
        <begin position="47"/>
        <end position="50"/>
    </location>
</feature>
<feature type="strand" evidence="6">
    <location>
        <begin position="58"/>
        <end position="67"/>
    </location>
</feature>
<feature type="helix" evidence="6">
    <location>
        <begin position="70"/>
        <end position="88"/>
    </location>
</feature>
<feature type="helix" evidence="6">
    <location>
        <begin position="92"/>
        <end position="94"/>
    </location>
</feature>
<feature type="strand" evidence="6">
    <location>
        <begin position="95"/>
        <end position="101"/>
    </location>
</feature>
<feature type="helix" evidence="6">
    <location>
        <begin position="104"/>
        <end position="106"/>
    </location>
</feature>
<feature type="strand" evidence="6">
    <location>
        <begin position="107"/>
        <end position="109"/>
    </location>
</feature>